<proteinExistence type="inferred from homology"/>
<name>MNMA_TRIL1</name>
<keyword id="KW-0067">ATP-binding</keyword>
<keyword id="KW-0963">Cytoplasm</keyword>
<keyword id="KW-1015">Disulfide bond</keyword>
<keyword id="KW-0547">Nucleotide-binding</keyword>
<keyword id="KW-1185">Reference proteome</keyword>
<keyword id="KW-0694">RNA-binding</keyword>
<keyword id="KW-0808">Transferase</keyword>
<keyword id="KW-0819">tRNA processing</keyword>
<keyword id="KW-0820">tRNA-binding</keyword>
<gene>
    <name evidence="1" type="primary">mnmA</name>
    <name type="ordered locus">Glov_3073</name>
</gene>
<evidence type="ECO:0000255" key="1">
    <source>
        <dbReference type="HAMAP-Rule" id="MF_00144"/>
    </source>
</evidence>
<protein>
    <recommendedName>
        <fullName evidence="1">tRNA-specific 2-thiouridylase MnmA</fullName>
        <ecNumber evidence="1">2.8.1.13</ecNumber>
    </recommendedName>
</protein>
<comment type="function">
    <text evidence="1">Catalyzes the 2-thiolation of uridine at the wobble position (U34) of tRNA, leading to the formation of s(2)U34.</text>
</comment>
<comment type="catalytic activity">
    <reaction evidence="1">
        <text>S-sulfanyl-L-cysteinyl-[protein] + uridine(34) in tRNA + AH2 + ATP = 2-thiouridine(34) in tRNA + L-cysteinyl-[protein] + A + AMP + diphosphate + H(+)</text>
        <dbReference type="Rhea" id="RHEA:47032"/>
        <dbReference type="Rhea" id="RHEA-COMP:10131"/>
        <dbReference type="Rhea" id="RHEA-COMP:11726"/>
        <dbReference type="Rhea" id="RHEA-COMP:11727"/>
        <dbReference type="Rhea" id="RHEA-COMP:11728"/>
        <dbReference type="ChEBI" id="CHEBI:13193"/>
        <dbReference type="ChEBI" id="CHEBI:15378"/>
        <dbReference type="ChEBI" id="CHEBI:17499"/>
        <dbReference type="ChEBI" id="CHEBI:29950"/>
        <dbReference type="ChEBI" id="CHEBI:30616"/>
        <dbReference type="ChEBI" id="CHEBI:33019"/>
        <dbReference type="ChEBI" id="CHEBI:61963"/>
        <dbReference type="ChEBI" id="CHEBI:65315"/>
        <dbReference type="ChEBI" id="CHEBI:87170"/>
        <dbReference type="ChEBI" id="CHEBI:456215"/>
        <dbReference type="EC" id="2.8.1.13"/>
    </reaction>
</comment>
<comment type="subcellular location">
    <subcellularLocation>
        <location evidence="1">Cytoplasm</location>
    </subcellularLocation>
</comment>
<comment type="similarity">
    <text evidence="1">Belongs to the MnmA/TRMU family.</text>
</comment>
<dbReference type="EC" id="2.8.1.13" evidence="1"/>
<dbReference type="EMBL" id="CP001089">
    <property type="protein sequence ID" value="ACD96779.1"/>
    <property type="molecule type" value="Genomic_DNA"/>
</dbReference>
<dbReference type="RefSeq" id="WP_012471104.1">
    <property type="nucleotide sequence ID" value="NC_010814.1"/>
</dbReference>
<dbReference type="SMR" id="B3E966"/>
<dbReference type="STRING" id="398767.Glov_3073"/>
<dbReference type="KEGG" id="glo:Glov_3073"/>
<dbReference type="eggNOG" id="COG0482">
    <property type="taxonomic scope" value="Bacteria"/>
</dbReference>
<dbReference type="HOGENOM" id="CLU_035188_0_0_7"/>
<dbReference type="OrthoDB" id="9800696at2"/>
<dbReference type="Proteomes" id="UP000002420">
    <property type="component" value="Chromosome"/>
</dbReference>
<dbReference type="GO" id="GO:0005737">
    <property type="term" value="C:cytoplasm"/>
    <property type="evidence" value="ECO:0007669"/>
    <property type="project" value="UniProtKB-SubCell"/>
</dbReference>
<dbReference type="GO" id="GO:0005524">
    <property type="term" value="F:ATP binding"/>
    <property type="evidence" value="ECO:0007669"/>
    <property type="project" value="UniProtKB-KW"/>
</dbReference>
<dbReference type="GO" id="GO:0000049">
    <property type="term" value="F:tRNA binding"/>
    <property type="evidence" value="ECO:0007669"/>
    <property type="project" value="UniProtKB-KW"/>
</dbReference>
<dbReference type="GO" id="GO:0103016">
    <property type="term" value="F:tRNA-uridine 2-sulfurtransferase activity"/>
    <property type="evidence" value="ECO:0007669"/>
    <property type="project" value="UniProtKB-EC"/>
</dbReference>
<dbReference type="GO" id="GO:0002143">
    <property type="term" value="P:tRNA wobble position uridine thiolation"/>
    <property type="evidence" value="ECO:0007669"/>
    <property type="project" value="TreeGrafter"/>
</dbReference>
<dbReference type="CDD" id="cd01998">
    <property type="entry name" value="MnmA_TRMU-like"/>
    <property type="match status" value="1"/>
</dbReference>
<dbReference type="FunFam" id="2.30.30.280:FF:000001">
    <property type="entry name" value="tRNA-specific 2-thiouridylase MnmA"/>
    <property type="match status" value="1"/>
</dbReference>
<dbReference type="FunFam" id="2.40.30.10:FF:000023">
    <property type="entry name" value="tRNA-specific 2-thiouridylase MnmA"/>
    <property type="match status" value="1"/>
</dbReference>
<dbReference type="Gene3D" id="2.30.30.280">
    <property type="entry name" value="Adenine nucleotide alpha hydrolases-like domains"/>
    <property type="match status" value="1"/>
</dbReference>
<dbReference type="Gene3D" id="3.40.50.620">
    <property type="entry name" value="HUPs"/>
    <property type="match status" value="1"/>
</dbReference>
<dbReference type="Gene3D" id="2.40.30.10">
    <property type="entry name" value="Translation factors"/>
    <property type="match status" value="1"/>
</dbReference>
<dbReference type="HAMAP" id="MF_00144">
    <property type="entry name" value="tRNA_thiouridyl_MnmA"/>
    <property type="match status" value="1"/>
</dbReference>
<dbReference type="InterPro" id="IPR004506">
    <property type="entry name" value="MnmA-like"/>
</dbReference>
<dbReference type="InterPro" id="IPR046885">
    <property type="entry name" value="MnmA-like_C"/>
</dbReference>
<dbReference type="InterPro" id="IPR046884">
    <property type="entry name" value="MnmA-like_central"/>
</dbReference>
<dbReference type="InterPro" id="IPR023382">
    <property type="entry name" value="MnmA-like_central_sf"/>
</dbReference>
<dbReference type="InterPro" id="IPR014729">
    <property type="entry name" value="Rossmann-like_a/b/a_fold"/>
</dbReference>
<dbReference type="NCBIfam" id="NF001138">
    <property type="entry name" value="PRK00143.1"/>
    <property type="match status" value="1"/>
</dbReference>
<dbReference type="NCBIfam" id="TIGR00420">
    <property type="entry name" value="trmU"/>
    <property type="match status" value="1"/>
</dbReference>
<dbReference type="PANTHER" id="PTHR11933:SF5">
    <property type="entry name" value="MITOCHONDRIAL TRNA-SPECIFIC 2-THIOURIDYLASE 1"/>
    <property type="match status" value="1"/>
</dbReference>
<dbReference type="PANTHER" id="PTHR11933">
    <property type="entry name" value="TRNA 5-METHYLAMINOMETHYL-2-THIOURIDYLATE -METHYLTRANSFERASE"/>
    <property type="match status" value="1"/>
</dbReference>
<dbReference type="Pfam" id="PF03054">
    <property type="entry name" value="tRNA_Me_trans"/>
    <property type="match status" value="1"/>
</dbReference>
<dbReference type="Pfam" id="PF20258">
    <property type="entry name" value="tRNA_Me_trans_C"/>
    <property type="match status" value="1"/>
</dbReference>
<dbReference type="Pfam" id="PF20259">
    <property type="entry name" value="tRNA_Me_trans_M"/>
    <property type="match status" value="1"/>
</dbReference>
<dbReference type="SUPFAM" id="SSF52402">
    <property type="entry name" value="Adenine nucleotide alpha hydrolases-like"/>
    <property type="match status" value="1"/>
</dbReference>
<feature type="chain" id="PRO_1000198612" description="tRNA-specific 2-thiouridylase MnmA">
    <location>
        <begin position="1"/>
        <end position="354"/>
    </location>
</feature>
<feature type="region of interest" description="Interaction with tRNA" evidence="1">
    <location>
        <begin position="141"/>
        <end position="143"/>
    </location>
</feature>
<feature type="region of interest" description="Interaction with tRNA" evidence="1">
    <location>
        <begin position="296"/>
        <end position="297"/>
    </location>
</feature>
<feature type="active site" description="Nucleophile" evidence="1">
    <location>
        <position position="94"/>
    </location>
</feature>
<feature type="active site" description="Cysteine persulfide intermediate" evidence="1">
    <location>
        <position position="192"/>
    </location>
</feature>
<feature type="binding site" evidence="1">
    <location>
        <begin position="7"/>
        <end position="14"/>
    </location>
    <ligand>
        <name>ATP</name>
        <dbReference type="ChEBI" id="CHEBI:30616"/>
    </ligand>
</feature>
<feature type="binding site" evidence="1">
    <location>
        <position position="33"/>
    </location>
    <ligand>
        <name>ATP</name>
        <dbReference type="ChEBI" id="CHEBI:30616"/>
    </ligand>
</feature>
<feature type="binding site" evidence="1">
    <location>
        <position position="118"/>
    </location>
    <ligand>
        <name>ATP</name>
        <dbReference type="ChEBI" id="CHEBI:30616"/>
    </ligand>
</feature>
<feature type="site" description="Interaction with tRNA" evidence="1">
    <location>
        <position position="119"/>
    </location>
</feature>
<feature type="site" description="Interaction with tRNA" evidence="1">
    <location>
        <position position="329"/>
    </location>
</feature>
<feature type="disulfide bond" description="Alternate" evidence="1">
    <location>
        <begin position="94"/>
        <end position="192"/>
    </location>
</feature>
<organism>
    <name type="scientific">Trichlorobacter lovleyi (strain ATCC BAA-1151 / DSM 17278 / SZ)</name>
    <name type="common">Geobacter lovleyi</name>
    <dbReference type="NCBI Taxonomy" id="398767"/>
    <lineage>
        <taxon>Bacteria</taxon>
        <taxon>Pseudomonadati</taxon>
        <taxon>Thermodesulfobacteriota</taxon>
        <taxon>Desulfuromonadia</taxon>
        <taxon>Geobacterales</taxon>
        <taxon>Geobacteraceae</taxon>
        <taxon>Trichlorobacter</taxon>
    </lineage>
</organism>
<reference key="1">
    <citation type="submission" date="2008-05" db="EMBL/GenBank/DDBJ databases">
        <title>Complete sequence of chromosome of Geobacter lovleyi SZ.</title>
        <authorList>
            <consortium name="US DOE Joint Genome Institute"/>
            <person name="Lucas S."/>
            <person name="Copeland A."/>
            <person name="Lapidus A."/>
            <person name="Glavina del Rio T."/>
            <person name="Dalin E."/>
            <person name="Tice H."/>
            <person name="Bruce D."/>
            <person name="Goodwin L."/>
            <person name="Pitluck S."/>
            <person name="Chertkov O."/>
            <person name="Meincke L."/>
            <person name="Brettin T."/>
            <person name="Detter J.C."/>
            <person name="Han C."/>
            <person name="Tapia R."/>
            <person name="Kuske C.R."/>
            <person name="Schmutz J."/>
            <person name="Larimer F."/>
            <person name="Land M."/>
            <person name="Hauser L."/>
            <person name="Kyrpides N."/>
            <person name="Mikhailova N."/>
            <person name="Sung Y."/>
            <person name="Fletcher K.E."/>
            <person name="Ritalahti K.M."/>
            <person name="Loeffler F.E."/>
            <person name="Richardson P."/>
        </authorList>
    </citation>
    <scope>NUCLEOTIDE SEQUENCE [LARGE SCALE GENOMIC DNA]</scope>
    <source>
        <strain>ATCC BAA-1151 / DSM 17278 / SZ</strain>
    </source>
</reference>
<sequence length="354" mass="38615">MSRIAVAMSGGVDSSVVAALLQQQGHEVIGITMQLFEPCSSGPGTPAHDGAQVAAQLGIPHHLLRLEPQFRDLIIDNFIDQYRQGQTPNPCILCNRLIKFGLLLEQARELGAELLATGHYVRRTVGPDGLCHLRTAANQAKDQSYFLYSLSQQQLRQVIFPLGEIASKDEVRSLATGFGLAVATKGDSQEVCFIPNDDYAAFLEQQGIKASPGNIVHIGGQVLGRHSGTHRYTIGQRKGLGIGWSEPLYVLEIDSSRNLIVVGEQQHLLKAGLIGADISWIIPPPATSFNTTCKIRYRHQPVPCRVELLADDQCRVLFDEAQRSVTPGQFVVFYQDDQVLGGGRIQAACTAEQP</sequence>
<accession>B3E966</accession>